<comment type="subcellular location">
    <subcellularLocation>
        <location evidence="2">Membrane</location>
        <topology evidence="2">Multi-pass membrane protein</topology>
    </subcellularLocation>
</comment>
<comment type="similarity">
    <text evidence="2">Belongs to the TMEM256 family.</text>
</comment>
<gene>
    <name type="primary">tmem256</name>
    <name type="ORF">zgc:110256</name>
</gene>
<reference key="1">
    <citation type="submission" date="2005-04" db="EMBL/GenBank/DDBJ databases">
        <authorList>
            <consortium name="NIH - Zebrafish Gene Collection (ZGC) project"/>
        </authorList>
    </citation>
    <scope>NUCLEOTIDE SEQUENCE [LARGE SCALE MRNA]</scope>
    <source>
        <tissue>Ovary</tissue>
    </source>
</reference>
<protein>
    <recommendedName>
        <fullName>Transmembrane protein 256</fullName>
    </recommendedName>
</protein>
<accession>Q568J8</accession>
<sequence length="114" mass="11954">MNAASLVQRVAGISGALAVAAGAYGAHGFRRSEASDYQRELFDTANKYHFYHSLALLGAARCRKPALAGVILLTGMGCFCGPLYHQPLTNDPSFSKLAPIGGSLLIVGWAAMAL</sequence>
<organism>
    <name type="scientific">Danio rerio</name>
    <name type="common">Zebrafish</name>
    <name type="synonym">Brachydanio rerio</name>
    <dbReference type="NCBI Taxonomy" id="7955"/>
    <lineage>
        <taxon>Eukaryota</taxon>
        <taxon>Metazoa</taxon>
        <taxon>Chordata</taxon>
        <taxon>Craniata</taxon>
        <taxon>Vertebrata</taxon>
        <taxon>Euteleostomi</taxon>
        <taxon>Actinopterygii</taxon>
        <taxon>Neopterygii</taxon>
        <taxon>Teleostei</taxon>
        <taxon>Ostariophysi</taxon>
        <taxon>Cypriniformes</taxon>
        <taxon>Danionidae</taxon>
        <taxon>Danioninae</taxon>
        <taxon>Danio</taxon>
    </lineage>
</organism>
<proteinExistence type="inferred from homology"/>
<feature type="signal peptide" evidence="1">
    <location>
        <begin position="1"/>
        <end position="25"/>
    </location>
</feature>
<feature type="chain" id="PRO_0000287172" description="Transmembrane protein 256">
    <location>
        <begin position="26"/>
        <end position="114"/>
    </location>
</feature>
<feature type="topological domain" description="Extracellular" evidence="1">
    <location>
        <begin position="26"/>
        <end position="64"/>
    </location>
</feature>
<feature type="transmembrane region" description="Helical" evidence="1">
    <location>
        <begin position="65"/>
        <end position="85"/>
    </location>
</feature>
<feature type="topological domain" description="Cytoplasmic" evidence="1">
    <location>
        <begin position="86"/>
        <end position="93"/>
    </location>
</feature>
<feature type="transmembrane region" description="Helical" evidence="1">
    <location>
        <begin position="94"/>
        <end position="114"/>
    </location>
</feature>
<name>TM256_DANRE</name>
<evidence type="ECO:0000255" key="1"/>
<evidence type="ECO:0000305" key="2"/>
<keyword id="KW-0472">Membrane</keyword>
<keyword id="KW-1185">Reference proteome</keyword>
<keyword id="KW-0732">Signal</keyword>
<keyword id="KW-0812">Transmembrane</keyword>
<keyword id="KW-1133">Transmembrane helix</keyword>
<dbReference type="EMBL" id="BC092829">
    <property type="protein sequence ID" value="AAH92829.1"/>
    <property type="molecule type" value="mRNA"/>
</dbReference>
<dbReference type="RefSeq" id="NP_001017620.1">
    <property type="nucleotide sequence ID" value="NM_001017620.1"/>
</dbReference>
<dbReference type="FunCoup" id="Q568J8">
    <property type="interactions" value="342"/>
</dbReference>
<dbReference type="STRING" id="7955.ENSDARP00000056789"/>
<dbReference type="PaxDb" id="7955-ENSDARP00000056789"/>
<dbReference type="GeneID" id="550283"/>
<dbReference type="KEGG" id="dre:550283"/>
<dbReference type="AGR" id="ZFIN:ZDB-GENE-050417-92"/>
<dbReference type="CTD" id="254863"/>
<dbReference type="ZFIN" id="ZDB-GENE-050417-92">
    <property type="gene designation" value="tmem256"/>
</dbReference>
<dbReference type="eggNOG" id="KOG3472">
    <property type="taxonomic scope" value="Eukaryota"/>
</dbReference>
<dbReference type="InParanoid" id="Q568J8"/>
<dbReference type="OrthoDB" id="269173at2759"/>
<dbReference type="PhylomeDB" id="Q568J8"/>
<dbReference type="PRO" id="PR:Q568J8"/>
<dbReference type="Proteomes" id="UP000000437">
    <property type="component" value="Chromosome 7"/>
</dbReference>
<dbReference type="GO" id="GO:0016020">
    <property type="term" value="C:membrane"/>
    <property type="evidence" value="ECO:0000318"/>
    <property type="project" value="GO_Central"/>
</dbReference>
<dbReference type="InterPro" id="IPR006696">
    <property type="entry name" value="DUF423"/>
</dbReference>
<dbReference type="PANTHER" id="PTHR43461">
    <property type="entry name" value="TRANSMEMBRANE PROTEIN 256"/>
    <property type="match status" value="1"/>
</dbReference>
<dbReference type="PANTHER" id="PTHR43461:SF1">
    <property type="entry name" value="TRANSMEMBRANE PROTEIN 256"/>
    <property type="match status" value="1"/>
</dbReference>
<dbReference type="Pfam" id="PF04241">
    <property type="entry name" value="DUF423"/>
    <property type="match status" value="1"/>
</dbReference>